<dbReference type="EMBL" id="CP000606">
    <property type="protein sequence ID" value="ABO22029.1"/>
    <property type="molecule type" value="Genomic_DNA"/>
</dbReference>
<dbReference type="RefSeq" id="WP_011070616.1">
    <property type="nucleotide sequence ID" value="NC_009092.1"/>
</dbReference>
<dbReference type="SMR" id="A3Q981"/>
<dbReference type="STRING" id="323850.Shew_0157"/>
<dbReference type="GeneID" id="94726185"/>
<dbReference type="KEGG" id="slo:Shew_0157"/>
<dbReference type="eggNOG" id="COG0051">
    <property type="taxonomic scope" value="Bacteria"/>
</dbReference>
<dbReference type="HOGENOM" id="CLU_122625_1_3_6"/>
<dbReference type="OrthoDB" id="9804464at2"/>
<dbReference type="Proteomes" id="UP000001558">
    <property type="component" value="Chromosome"/>
</dbReference>
<dbReference type="GO" id="GO:1990904">
    <property type="term" value="C:ribonucleoprotein complex"/>
    <property type="evidence" value="ECO:0007669"/>
    <property type="project" value="UniProtKB-KW"/>
</dbReference>
<dbReference type="GO" id="GO:0005840">
    <property type="term" value="C:ribosome"/>
    <property type="evidence" value="ECO:0007669"/>
    <property type="project" value="UniProtKB-KW"/>
</dbReference>
<dbReference type="GO" id="GO:0003735">
    <property type="term" value="F:structural constituent of ribosome"/>
    <property type="evidence" value="ECO:0007669"/>
    <property type="project" value="InterPro"/>
</dbReference>
<dbReference type="GO" id="GO:0000049">
    <property type="term" value="F:tRNA binding"/>
    <property type="evidence" value="ECO:0007669"/>
    <property type="project" value="UniProtKB-UniRule"/>
</dbReference>
<dbReference type="GO" id="GO:0006412">
    <property type="term" value="P:translation"/>
    <property type="evidence" value="ECO:0007669"/>
    <property type="project" value="UniProtKB-UniRule"/>
</dbReference>
<dbReference type="FunFam" id="3.30.70.600:FF:000001">
    <property type="entry name" value="30S ribosomal protein S10"/>
    <property type="match status" value="1"/>
</dbReference>
<dbReference type="Gene3D" id="3.30.70.600">
    <property type="entry name" value="Ribosomal protein S10 domain"/>
    <property type="match status" value="1"/>
</dbReference>
<dbReference type="HAMAP" id="MF_00508">
    <property type="entry name" value="Ribosomal_uS10"/>
    <property type="match status" value="1"/>
</dbReference>
<dbReference type="InterPro" id="IPR001848">
    <property type="entry name" value="Ribosomal_uS10"/>
</dbReference>
<dbReference type="InterPro" id="IPR018268">
    <property type="entry name" value="Ribosomal_uS10_CS"/>
</dbReference>
<dbReference type="InterPro" id="IPR027486">
    <property type="entry name" value="Ribosomal_uS10_dom"/>
</dbReference>
<dbReference type="InterPro" id="IPR036838">
    <property type="entry name" value="Ribosomal_uS10_dom_sf"/>
</dbReference>
<dbReference type="NCBIfam" id="NF001861">
    <property type="entry name" value="PRK00596.1"/>
    <property type="match status" value="1"/>
</dbReference>
<dbReference type="NCBIfam" id="TIGR01049">
    <property type="entry name" value="rpsJ_bact"/>
    <property type="match status" value="1"/>
</dbReference>
<dbReference type="PANTHER" id="PTHR11700">
    <property type="entry name" value="30S RIBOSOMAL PROTEIN S10 FAMILY MEMBER"/>
    <property type="match status" value="1"/>
</dbReference>
<dbReference type="Pfam" id="PF00338">
    <property type="entry name" value="Ribosomal_S10"/>
    <property type="match status" value="1"/>
</dbReference>
<dbReference type="PRINTS" id="PR00971">
    <property type="entry name" value="RIBOSOMALS10"/>
</dbReference>
<dbReference type="SMART" id="SM01403">
    <property type="entry name" value="Ribosomal_S10"/>
    <property type="match status" value="1"/>
</dbReference>
<dbReference type="SUPFAM" id="SSF54999">
    <property type="entry name" value="Ribosomal protein S10"/>
    <property type="match status" value="1"/>
</dbReference>
<dbReference type="PROSITE" id="PS00361">
    <property type="entry name" value="RIBOSOMAL_S10"/>
    <property type="match status" value="1"/>
</dbReference>
<proteinExistence type="inferred from homology"/>
<name>RS10_SHELP</name>
<protein>
    <recommendedName>
        <fullName evidence="1">Small ribosomal subunit protein uS10</fullName>
    </recommendedName>
    <alternativeName>
        <fullName evidence="2">30S ribosomal protein S10</fullName>
    </alternativeName>
</protein>
<organism>
    <name type="scientific">Shewanella loihica (strain ATCC BAA-1088 / PV-4)</name>
    <dbReference type="NCBI Taxonomy" id="323850"/>
    <lineage>
        <taxon>Bacteria</taxon>
        <taxon>Pseudomonadati</taxon>
        <taxon>Pseudomonadota</taxon>
        <taxon>Gammaproteobacteria</taxon>
        <taxon>Alteromonadales</taxon>
        <taxon>Shewanellaceae</taxon>
        <taxon>Shewanella</taxon>
    </lineage>
</organism>
<keyword id="KW-1185">Reference proteome</keyword>
<keyword id="KW-0687">Ribonucleoprotein</keyword>
<keyword id="KW-0689">Ribosomal protein</keyword>
<sequence length="103" mass="11769">MQNQRIRIRLKGFDHRLIDQSTAEIVETAKRTGAQVRGPIPLPTRKERYTVLISPHVNKDARDQYELRTHKRLVDIVEPTEKTVDALMRLDLAAGVDVQISLG</sequence>
<gene>
    <name evidence="1" type="primary">rpsJ</name>
    <name type="ordered locus">Shew_0157</name>
</gene>
<evidence type="ECO:0000255" key="1">
    <source>
        <dbReference type="HAMAP-Rule" id="MF_00508"/>
    </source>
</evidence>
<evidence type="ECO:0000305" key="2"/>
<feature type="chain" id="PRO_1000015111" description="Small ribosomal subunit protein uS10">
    <location>
        <begin position="1"/>
        <end position="103"/>
    </location>
</feature>
<reference key="1">
    <citation type="submission" date="2007-03" db="EMBL/GenBank/DDBJ databases">
        <title>Complete sequence of Shewanella loihica PV-4.</title>
        <authorList>
            <consortium name="US DOE Joint Genome Institute"/>
            <person name="Copeland A."/>
            <person name="Lucas S."/>
            <person name="Lapidus A."/>
            <person name="Barry K."/>
            <person name="Detter J.C."/>
            <person name="Glavina del Rio T."/>
            <person name="Hammon N."/>
            <person name="Israni S."/>
            <person name="Dalin E."/>
            <person name="Tice H."/>
            <person name="Pitluck S."/>
            <person name="Chain P."/>
            <person name="Malfatti S."/>
            <person name="Shin M."/>
            <person name="Vergez L."/>
            <person name="Schmutz J."/>
            <person name="Larimer F."/>
            <person name="Land M."/>
            <person name="Hauser L."/>
            <person name="Kyrpides N."/>
            <person name="Mikhailova N."/>
            <person name="Romine M.F."/>
            <person name="Serres G."/>
            <person name="Fredrickson J."/>
            <person name="Tiedje J."/>
            <person name="Richardson P."/>
        </authorList>
    </citation>
    <scope>NUCLEOTIDE SEQUENCE [LARGE SCALE GENOMIC DNA]</scope>
    <source>
        <strain>ATCC BAA-1088 / PV-4</strain>
    </source>
</reference>
<comment type="function">
    <text evidence="1">Involved in the binding of tRNA to the ribosomes.</text>
</comment>
<comment type="subunit">
    <text evidence="1">Part of the 30S ribosomal subunit.</text>
</comment>
<comment type="similarity">
    <text evidence="1">Belongs to the universal ribosomal protein uS10 family.</text>
</comment>
<accession>A3Q981</accession>